<feature type="chain" id="PRO_0000428969" description="Gamma-tubulin complex component 2">
    <location>
        <begin position="1"/>
        <end position="678"/>
    </location>
</feature>
<feature type="region of interest" description="Triggers nucleus envelope localization">
    <location>
        <begin position="63"/>
        <end position="116"/>
    </location>
</feature>
<feature type="region of interest" description="Triggers nucleus envelope localization">
    <location>
        <begin position="118"/>
        <end position="180"/>
    </location>
</feature>
<feature type="region of interest" description="Triggers nucleus envelope localization">
    <location>
        <begin position="290"/>
        <end position="318"/>
    </location>
</feature>
<feature type="region of interest" description="Triggers nucleus envelope localization">
    <location>
        <begin position="472"/>
        <end position="548"/>
    </location>
</feature>
<feature type="region of interest" description="Triggers nucleus envelope localization">
    <location>
        <begin position="587"/>
        <end position="622"/>
    </location>
</feature>
<feature type="splice variant" id="VSP_054536" description="In isoform 2." evidence="5">
    <original>D</original>
    <variation>DS</variation>
    <location>
        <position position="45"/>
    </location>
</feature>
<feature type="mutagenesis site" description="In spr3; right-handed helical growth due to anisotropic cell expansion and abnormal microtubule branching characterized by wider and divergently distributed nucleating angles. Impaired interaction with GCP3." evidence="3">
    <original>G</original>
    <variation>R</variation>
    <location>
        <position position="305"/>
    </location>
</feature>
<sequence length="678" mass="76946">MESMTPISCPTTPRWNQDRPFLTGRFHQETRASSKFADSKRFTLDSSSSGVEQAIGCYDTPVQELIVIDDLLSALVGIEGRYISIKRFHGKEDSIAFQVDPSMDLALQELAKRIFPLCEYYLLIDQFVESSSQFKNGLVNHAFAAALRALLLDYQAMVAQLEHQFRLGRLSIQGLWFYCQPMMGSMRALAAVIQQASTKQFVGSGVLNLLQSQAKAMAGDNSVRSLLEKMTECASNAYLSILERWVYEGIIDDPYGEFFIAENRSLKKESLSQDSTAKYWSQRYSLKDTIPGFLANIAATILTTGKYLNVMRECGHNVQVPISERSKLTIFGSNHHYLECIKAAHEFASIELVNLIKDKYDLVGRLRSIKHYLLLDQGDFLVHFMDIAREELNKKVHEISVEKLQSLLDLALRTTAAAADPRHEDLTCCVDRASLLTTLGMHKDTDSNSIEDPMSITGLETFSLSYKVQWPLSIVISKKALSKYQLIFRFLFHCKHVERQLCGAWQIHQGIRSMNSKGTAILRSSLLCRSMLKFISSLLHYLTFEVLEPNWHVMHDRLQSTRSVDEVIQHHDFFLDKCLRGCLLLLPDVLKKMEKLKSVCLQYAAATQWLISSSIDINSQSHPQKTMIRDTTVTESIFNFEREFNSELQSLGPVLSKGSQAEPYLTHLSQWILGVSKE</sequence>
<name>GACP2_ARATH</name>
<proteinExistence type="evidence at protein level"/>
<evidence type="ECO:0000250" key="1">
    <source>
        <dbReference type="UniProtKB" id="Q9BSJ2"/>
    </source>
</evidence>
<evidence type="ECO:0000269" key="2">
    <source>
    </source>
</evidence>
<evidence type="ECO:0000269" key="3">
    <source>
    </source>
</evidence>
<evidence type="ECO:0000269" key="4">
    <source>
    </source>
</evidence>
<evidence type="ECO:0000305" key="5"/>
<dbReference type="EMBL" id="AL391142">
    <property type="protein sequence ID" value="CAC01736.1"/>
    <property type="status" value="ALT_SEQ"/>
    <property type="molecule type" value="Genomic_DNA"/>
</dbReference>
<dbReference type="EMBL" id="CP002688">
    <property type="protein sequence ID" value="AED92422.1"/>
    <property type="molecule type" value="Genomic_DNA"/>
</dbReference>
<dbReference type="EMBL" id="CP002688">
    <property type="protein sequence ID" value="AED92423.1"/>
    <property type="molecule type" value="Genomic_DNA"/>
</dbReference>
<dbReference type="EMBL" id="AF360238">
    <property type="protein sequence ID" value="AAK25948.1"/>
    <property type="molecule type" value="mRNA"/>
</dbReference>
<dbReference type="EMBL" id="AY040037">
    <property type="protein sequence ID" value="AAK64095.1"/>
    <property type="molecule type" value="mRNA"/>
</dbReference>
<dbReference type="PIR" id="T51578">
    <property type="entry name" value="T51578"/>
</dbReference>
<dbReference type="RefSeq" id="NP_568346.1">
    <molecule id="Q9C5H9-1"/>
    <property type="nucleotide sequence ID" value="NM_121747.4"/>
</dbReference>
<dbReference type="RefSeq" id="NP_850838.1">
    <molecule id="Q9C5H9-2"/>
    <property type="nucleotide sequence ID" value="NM_180507.2"/>
</dbReference>
<dbReference type="SMR" id="Q9C5H9"/>
<dbReference type="BioGRID" id="16883">
    <property type="interactions" value="2"/>
</dbReference>
<dbReference type="FunCoup" id="Q9C5H9">
    <property type="interactions" value="4284"/>
</dbReference>
<dbReference type="IntAct" id="Q9C5H9">
    <property type="interactions" value="1"/>
</dbReference>
<dbReference type="STRING" id="3702.Q9C5H9"/>
<dbReference type="PaxDb" id="3702-AT5G17410.2"/>
<dbReference type="ProteomicsDB" id="230443">
    <molecule id="Q9C5H9-1"/>
</dbReference>
<dbReference type="EnsemblPlants" id="AT5G17410.1">
    <molecule id="Q9C5H9-1"/>
    <property type="protein sequence ID" value="AT5G17410.1"/>
    <property type="gene ID" value="AT5G17410"/>
</dbReference>
<dbReference type="EnsemblPlants" id="AT5G17410.2">
    <molecule id="Q9C5H9-2"/>
    <property type="protein sequence ID" value="AT5G17410.2"/>
    <property type="gene ID" value="AT5G17410"/>
</dbReference>
<dbReference type="GeneID" id="831607"/>
<dbReference type="Gramene" id="AT5G17410.1">
    <molecule id="Q9C5H9-1"/>
    <property type="protein sequence ID" value="AT5G17410.1"/>
    <property type="gene ID" value="AT5G17410"/>
</dbReference>
<dbReference type="Gramene" id="AT5G17410.2">
    <molecule id="Q9C5H9-2"/>
    <property type="protein sequence ID" value="AT5G17410.2"/>
    <property type="gene ID" value="AT5G17410"/>
</dbReference>
<dbReference type="KEGG" id="ath:AT5G17410"/>
<dbReference type="Araport" id="AT5G17410"/>
<dbReference type="TAIR" id="AT5G17410"/>
<dbReference type="eggNOG" id="KOG2001">
    <property type="taxonomic scope" value="Eukaryota"/>
</dbReference>
<dbReference type="HOGENOM" id="CLU_007738_1_1_1"/>
<dbReference type="InParanoid" id="Q9C5H9"/>
<dbReference type="OMA" id="QNMSGDP"/>
<dbReference type="OrthoDB" id="2192946at2759"/>
<dbReference type="PhylomeDB" id="Q9C5H9"/>
<dbReference type="PRO" id="PR:Q9C5H9"/>
<dbReference type="Proteomes" id="UP000006548">
    <property type="component" value="Chromosome 5"/>
</dbReference>
<dbReference type="ExpressionAtlas" id="Q9C5H9">
    <property type="expression patterns" value="baseline and differential"/>
</dbReference>
<dbReference type="GO" id="GO:0005938">
    <property type="term" value="C:cell cortex"/>
    <property type="evidence" value="ECO:0000314"/>
    <property type="project" value="UniProtKB"/>
</dbReference>
<dbReference type="GO" id="GO:0055028">
    <property type="term" value="C:cortical microtubule"/>
    <property type="evidence" value="ECO:0000314"/>
    <property type="project" value="UniProtKB"/>
</dbReference>
<dbReference type="GO" id="GO:0005737">
    <property type="term" value="C:cytoplasm"/>
    <property type="evidence" value="ECO:0000314"/>
    <property type="project" value="UniProtKB"/>
</dbReference>
<dbReference type="GO" id="GO:0000930">
    <property type="term" value="C:gamma-tubulin complex"/>
    <property type="evidence" value="ECO:0000314"/>
    <property type="project" value="UniProtKB"/>
</dbReference>
<dbReference type="GO" id="GO:0005635">
    <property type="term" value="C:nuclear envelope"/>
    <property type="evidence" value="ECO:0000314"/>
    <property type="project" value="UniProtKB"/>
</dbReference>
<dbReference type="GO" id="GO:0000922">
    <property type="term" value="C:spindle pole"/>
    <property type="evidence" value="ECO:0007669"/>
    <property type="project" value="InterPro"/>
</dbReference>
<dbReference type="GO" id="GO:0043015">
    <property type="term" value="F:gamma-tubulin binding"/>
    <property type="evidence" value="ECO:0007669"/>
    <property type="project" value="InterPro"/>
</dbReference>
<dbReference type="GO" id="GO:0048229">
    <property type="term" value="P:gametophyte development"/>
    <property type="evidence" value="ECO:0000315"/>
    <property type="project" value="UniProtKB"/>
</dbReference>
<dbReference type="GO" id="GO:0033566">
    <property type="term" value="P:gamma-tubulin complex localization"/>
    <property type="evidence" value="ECO:0000315"/>
    <property type="project" value="UniProtKB"/>
</dbReference>
<dbReference type="GO" id="GO:0007020">
    <property type="term" value="P:microtubule nucleation"/>
    <property type="evidence" value="ECO:0007669"/>
    <property type="project" value="InterPro"/>
</dbReference>
<dbReference type="GO" id="GO:0090063">
    <property type="term" value="P:positive regulation of microtubule nucleation"/>
    <property type="evidence" value="ECO:0000314"/>
    <property type="project" value="UniProtKB"/>
</dbReference>
<dbReference type="FunFam" id="1.20.120.1900:FF:000009">
    <property type="entry name" value="Gamma-tubulin complex component"/>
    <property type="match status" value="1"/>
</dbReference>
<dbReference type="Gene3D" id="1.20.120.1900">
    <property type="entry name" value="Gamma-tubulin complex, C-terminal domain"/>
    <property type="match status" value="1"/>
</dbReference>
<dbReference type="InterPro" id="IPR007259">
    <property type="entry name" value="GCP"/>
</dbReference>
<dbReference type="InterPro" id="IPR040457">
    <property type="entry name" value="GCP_C"/>
</dbReference>
<dbReference type="InterPro" id="IPR042241">
    <property type="entry name" value="GCP_C_sf"/>
</dbReference>
<dbReference type="InterPro" id="IPR041470">
    <property type="entry name" value="GCP_N"/>
</dbReference>
<dbReference type="PANTHER" id="PTHR19302">
    <property type="entry name" value="GAMMA TUBULIN COMPLEX PROTEIN"/>
    <property type="match status" value="1"/>
</dbReference>
<dbReference type="PANTHER" id="PTHR19302:SF13">
    <property type="entry name" value="GAMMA-TUBULIN COMPLEX COMPONENT 2"/>
    <property type="match status" value="1"/>
</dbReference>
<dbReference type="Pfam" id="PF04130">
    <property type="entry name" value="GCP_C_terminal"/>
    <property type="match status" value="1"/>
</dbReference>
<dbReference type="Pfam" id="PF17681">
    <property type="entry name" value="GCP_N_terminal"/>
    <property type="match status" value="1"/>
</dbReference>
<organism>
    <name type="scientific">Arabidopsis thaliana</name>
    <name type="common">Mouse-ear cress</name>
    <dbReference type="NCBI Taxonomy" id="3702"/>
    <lineage>
        <taxon>Eukaryota</taxon>
        <taxon>Viridiplantae</taxon>
        <taxon>Streptophyta</taxon>
        <taxon>Embryophyta</taxon>
        <taxon>Tracheophyta</taxon>
        <taxon>Spermatophyta</taxon>
        <taxon>Magnoliopsida</taxon>
        <taxon>eudicotyledons</taxon>
        <taxon>Gunneridae</taxon>
        <taxon>Pentapetalae</taxon>
        <taxon>rosids</taxon>
        <taxon>malvids</taxon>
        <taxon>Brassicales</taxon>
        <taxon>Brassicaceae</taxon>
        <taxon>Camelineae</taxon>
        <taxon>Arabidopsis</taxon>
    </lineage>
</organism>
<accession>Q9C5H9</accession>
<accession>F4KGZ8</accession>
<accession>Q9LF43</accession>
<gene>
    <name type="primary">GCP2</name>
    <name type="synonym">SPC97</name>
    <name type="synonym">SPR3</name>
    <name type="ordered locus">At5g17410</name>
    <name type="ORF">T10B6.70</name>
</gene>
<reference key="1">
    <citation type="journal article" date="2000" name="Nature">
        <title>Sequence and analysis of chromosome 5 of the plant Arabidopsis thaliana.</title>
        <authorList>
            <person name="Tabata S."/>
            <person name="Kaneko T."/>
            <person name="Nakamura Y."/>
            <person name="Kotani H."/>
            <person name="Kato T."/>
            <person name="Asamizu E."/>
            <person name="Miyajima N."/>
            <person name="Sasamoto S."/>
            <person name="Kimura T."/>
            <person name="Hosouchi T."/>
            <person name="Kawashima K."/>
            <person name="Kohara M."/>
            <person name="Matsumoto M."/>
            <person name="Matsuno A."/>
            <person name="Muraki A."/>
            <person name="Nakayama S."/>
            <person name="Nakazaki N."/>
            <person name="Naruo K."/>
            <person name="Okumura S."/>
            <person name="Shinpo S."/>
            <person name="Takeuchi C."/>
            <person name="Wada T."/>
            <person name="Watanabe A."/>
            <person name="Yamada M."/>
            <person name="Yasuda M."/>
            <person name="Sato S."/>
            <person name="de la Bastide M."/>
            <person name="Huang E."/>
            <person name="Spiegel L."/>
            <person name="Gnoj L."/>
            <person name="O'Shaughnessy A."/>
            <person name="Preston R."/>
            <person name="Habermann K."/>
            <person name="Murray J."/>
            <person name="Johnson D."/>
            <person name="Rohlfing T."/>
            <person name="Nelson J."/>
            <person name="Stoneking T."/>
            <person name="Pepin K."/>
            <person name="Spieth J."/>
            <person name="Sekhon M."/>
            <person name="Armstrong J."/>
            <person name="Becker M."/>
            <person name="Belter E."/>
            <person name="Cordum H."/>
            <person name="Cordes M."/>
            <person name="Courtney L."/>
            <person name="Courtney W."/>
            <person name="Dante M."/>
            <person name="Du H."/>
            <person name="Edwards J."/>
            <person name="Fryman J."/>
            <person name="Haakensen B."/>
            <person name="Lamar E."/>
            <person name="Latreille P."/>
            <person name="Leonard S."/>
            <person name="Meyer R."/>
            <person name="Mulvaney E."/>
            <person name="Ozersky P."/>
            <person name="Riley A."/>
            <person name="Strowmatt C."/>
            <person name="Wagner-McPherson C."/>
            <person name="Wollam A."/>
            <person name="Yoakum M."/>
            <person name="Bell M."/>
            <person name="Dedhia N."/>
            <person name="Parnell L."/>
            <person name="Shah R."/>
            <person name="Rodriguez M."/>
            <person name="Hoon See L."/>
            <person name="Vil D."/>
            <person name="Baker J."/>
            <person name="Kirchoff K."/>
            <person name="Toth K."/>
            <person name="King L."/>
            <person name="Bahret A."/>
            <person name="Miller B."/>
            <person name="Marra M.A."/>
            <person name="Martienssen R."/>
            <person name="McCombie W.R."/>
            <person name="Wilson R.K."/>
            <person name="Murphy G."/>
            <person name="Bancroft I."/>
            <person name="Volckaert G."/>
            <person name="Wambutt R."/>
            <person name="Duesterhoeft A."/>
            <person name="Stiekema W."/>
            <person name="Pohl T."/>
            <person name="Entian K.-D."/>
            <person name="Terryn N."/>
            <person name="Hartley N."/>
            <person name="Bent E."/>
            <person name="Johnson S."/>
            <person name="Langham S.-A."/>
            <person name="McCullagh B."/>
            <person name="Robben J."/>
            <person name="Grymonprez B."/>
            <person name="Zimmermann W."/>
            <person name="Ramsperger U."/>
            <person name="Wedler H."/>
            <person name="Balke K."/>
            <person name="Wedler E."/>
            <person name="Peters S."/>
            <person name="van Staveren M."/>
            <person name="Dirkse W."/>
            <person name="Mooijman P."/>
            <person name="Klein Lankhorst R."/>
            <person name="Weitzenegger T."/>
            <person name="Bothe G."/>
            <person name="Rose M."/>
            <person name="Hauf J."/>
            <person name="Berneiser S."/>
            <person name="Hempel S."/>
            <person name="Feldpausch M."/>
            <person name="Lamberth S."/>
            <person name="Villarroel R."/>
            <person name="Gielen J."/>
            <person name="Ardiles W."/>
            <person name="Bents O."/>
            <person name="Lemcke K."/>
            <person name="Kolesov G."/>
            <person name="Mayer K.F.X."/>
            <person name="Rudd S."/>
            <person name="Schoof H."/>
            <person name="Schueller C."/>
            <person name="Zaccaria P."/>
            <person name="Mewes H.-W."/>
            <person name="Bevan M."/>
            <person name="Fransz P.F."/>
        </authorList>
    </citation>
    <scope>NUCLEOTIDE SEQUENCE [LARGE SCALE GENOMIC DNA]</scope>
    <source>
        <strain>cv. Columbia</strain>
    </source>
</reference>
<reference key="2">
    <citation type="journal article" date="2017" name="Plant J.">
        <title>Araport11: a complete reannotation of the Arabidopsis thaliana reference genome.</title>
        <authorList>
            <person name="Cheng C.Y."/>
            <person name="Krishnakumar V."/>
            <person name="Chan A.P."/>
            <person name="Thibaud-Nissen F."/>
            <person name="Schobel S."/>
            <person name="Town C.D."/>
        </authorList>
    </citation>
    <scope>GENOME REANNOTATION</scope>
    <source>
        <strain>cv. Columbia</strain>
    </source>
</reference>
<reference key="3">
    <citation type="journal article" date="2003" name="Science">
        <title>Empirical analysis of transcriptional activity in the Arabidopsis genome.</title>
        <authorList>
            <person name="Yamada K."/>
            <person name="Lim J."/>
            <person name="Dale J.M."/>
            <person name="Chen H."/>
            <person name="Shinn P."/>
            <person name="Palm C.J."/>
            <person name="Southwick A.M."/>
            <person name="Wu H.C."/>
            <person name="Kim C.J."/>
            <person name="Nguyen M."/>
            <person name="Pham P.K."/>
            <person name="Cheuk R.F."/>
            <person name="Karlin-Newmann G."/>
            <person name="Liu S.X."/>
            <person name="Lam B."/>
            <person name="Sakano H."/>
            <person name="Wu T."/>
            <person name="Yu G."/>
            <person name="Miranda M."/>
            <person name="Quach H.L."/>
            <person name="Tripp M."/>
            <person name="Chang C.H."/>
            <person name="Lee J.M."/>
            <person name="Toriumi M.J."/>
            <person name="Chan M.M."/>
            <person name="Tang C.C."/>
            <person name="Onodera C.S."/>
            <person name="Deng J.M."/>
            <person name="Akiyama K."/>
            <person name="Ansari Y."/>
            <person name="Arakawa T."/>
            <person name="Banh J."/>
            <person name="Banno F."/>
            <person name="Bowser L."/>
            <person name="Brooks S.Y."/>
            <person name="Carninci P."/>
            <person name="Chao Q."/>
            <person name="Choy N."/>
            <person name="Enju A."/>
            <person name="Goldsmith A.D."/>
            <person name="Gurjal M."/>
            <person name="Hansen N.F."/>
            <person name="Hayashizaki Y."/>
            <person name="Johnson-Hopson C."/>
            <person name="Hsuan V.W."/>
            <person name="Iida K."/>
            <person name="Karnes M."/>
            <person name="Khan S."/>
            <person name="Koesema E."/>
            <person name="Ishida J."/>
            <person name="Jiang P.X."/>
            <person name="Jones T."/>
            <person name="Kawai J."/>
            <person name="Kamiya A."/>
            <person name="Meyers C."/>
            <person name="Nakajima M."/>
            <person name="Narusaka M."/>
            <person name="Seki M."/>
            <person name="Sakurai T."/>
            <person name="Satou M."/>
            <person name="Tamse R."/>
            <person name="Vaysberg M."/>
            <person name="Wallender E.K."/>
            <person name="Wong C."/>
            <person name="Yamamura Y."/>
            <person name="Yuan S."/>
            <person name="Shinozaki K."/>
            <person name="Davis R.W."/>
            <person name="Theologis A."/>
            <person name="Ecker J.R."/>
        </authorList>
    </citation>
    <scope>NUCLEOTIDE SEQUENCE [LARGE SCALE MRNA]</scope>
    <source>
        <strain>cv. Columbia</strain>
    </source>
</reference>
<reference key="4">
    <citation type="journal article" date="2007" name="Plant J.">
        <title>Arabidopsis GCP2 and GCP3 are part of a soluble gamma-tubulin complex and have nuclear envelope targeting domains.</title>
        <authorList>
            <person name="Seltzer V."/>
            <person name="Janski N."/>
            <person name="Canaday J."/>
            <person name="Herzog E."/>
            <person name="Erhardt M."/>
            <person name="Evrard J.L."/>
            <person name="Schmit A.C."/>
        </authorList>
    </citation>
    <scope>SUBCELLULAR LOCATION</scope>
    <scope>SUBUNIT</scope>
    <scope>NUCLEUS ENVELOPE LOCALIZATION REGIONS</scope>
</reference>
<reference key="5">
    <citation type="journal article" date="2009" name="J. Cell Sci.">
        <title>A mutation in the Arabidopsis gamma-tubulin-containing complex causes helical growth and abnormal microtubule branching.</title>
        <authorList>
            <person name="Nakamura M."/>
            <person name="Hashimoto T."/>
        </authorList>
    </citation>
    <scope>FUNCTION</scope>
    <scope>DISRUPTION PHENOTYPE</scope>
    <scope>INTERACTION WITH GCP3</scope>
    <scope>MUTAGENESIS OF GLY-305</scope>
    <source>
        <strain>cv. Wassilewskija</strain>
    </source>
</reference>
<reference key="6">
    <citation type="journal article" date="2010" name="Nat. Cell Biol.">
        <title>Microtubule and katanin-dependent dynamics of microtubule nucleation complexes in the acentrosomal Arabidopsis cortical array.</title>
        <authorList>
            <person name="Nakamura M."/>
            <person name="Ehrhardt D.W."/>
            <person name="Hashimoto T."/>
        </authorList>
    </citation>
    <scope>FUNCTION</scope>
    <scope>SUBUNIT</scope>
    <scope>SUBCELLULAR LOCATION</scope>
</reference>
<reference key="7">
    <citation type="journal article" date="2011" name="PLoS ONE">
        <title>Cell edges accumulate gamma tubulin complex components and nucleate microtubules following cytokinesis in Arabidopsis thaliana.</title>
        <authorList>
            <person name="Ambrose C."/>
            <person name="Wasteneys G.O."/>
        </authorList>
    </citation>
    <scope>SUBCELLULAR LOCATION</scope>
    <source>
        <strain>cv. Columbia</strain>
    </source>
</reference>
<comment type="function">
    <text evidence="3 4">Gamma-tubulin complex is necessary for microtubule nucleation at the microtubule organizing centers (MTOCs). Required for the positioning of the gamma-tubulin-containing complex on pre-existing microtubules and for the proper organization of cortical arrays.</text>
</comment>
<comment type="subunit">
    <text evidence="2 3 4">Part of the gamma-tubulin complex. Gamma-tubulin complex is composed of gamma-tubulin and GCP proteins (e.g. GCP2 and GCP3). Interacts directly with GCP3.</text>
</comment>
<comment type="subcellular location">
    <subcellularLocation>
        <location evidence="1">Cytoplasm</location>
        <location evidence="1">Cytoskeleton</location>
        <location evidence="1">Microtubule organizing center</location>
    </subcellularLocation>
    <subcellularLocation>
        <location>Nucleus envelope</location>
    </subcellularLocation>
    <subcellularLocation>
        <location>Cytoplasm</location>
    </subcellularLocation>
    <subcellularLocation>
        <location>Cytoplasm</location>
        <location>Cell cortex</location>
    </subcellularLocation>
    <text>Associated to motile complexes in the cytosol that transiently stabilized at fixed locations in the cell cortex (e.g. along the outer periclinal edge of newly formed crosswalls) from which microtubules grow away prior to microtubules nucleation. Colocalizes with gamma-tubulin at the nuclear surface where microtubules are nucleated.</text>
</comment>
<comment type="alternative products">
    <event type="alternative splicing"/>
    <isoform>
        <id>Q9C5H9-1</id>
        <name>1</name>
        <sequence type="displayed"/>
    </isoform>
    <isoform>
        <id>Q9C5H9-2</id>
        <name>2</name>
        <sequence type="described" ref="VSP_054536"/>
    </isoform>
</comment>
<comment type="disruption phenotype">
    <text evidence="3">Embryonic lethality. Impaired development of male and female gametophytes.</text>
</comment>
<comment type="similarity">
    <text evidence="5">Belongs to the TUBGCP family.</text>
</comment>
<comment type="sequence caution" evidence="5">
    <conflict type="erroneous gene model prediction">
        <sequence resource="EMBL-CDS" id="CAC01736"/>
    </conflict>
</comment>
<keyword id="KW-0025">Alternative splicing</keyword>
<keyword id="KW-0963">Cytoplasm</keyword>
<keyword id="KW-0206">Cytoskeleton</keyword>
<keyword id="KW-0217">Developmental protein</keyword>
<keyword id="KW-0493">Microtubule</keyword>
<keyword id="KW-0539">Nucleus</keyword>
<keyword id="KW-1185">Reference proteome</keyword>
<protein>
    <recommendedName>
        <fullName>Gamma-tubulin complex component 2</fullName>
        <shortName>AtGCP2</shortName>
        <shortName>GCP-2</shortName>
    </recommendedName>
    <alternativeName>
        <fullName>Protein SPIRAL 3</fullName>
    </alternativeName>
    <alternativeName>
        <fullName>Spindle pole body protein Spc97 homolog</fullName>
        <shortName>AtSpc97</shortName>
    </alternativeName>
</protein>